<evidence type="ECO:0000255" key="1">
    <source>
        <dbReference type="HAMAP-Rule" id="MF_00007"/>
    </source>
</evidence>
<evidence type="ECO:0000256" key="2">
    <source>
        <dbReference type="SAM" id="MobiDB-lite"/>
    </source>
</evidence>
<proteinExistence type="inferred from homology"/>
<reference key="1">
    <citation type="journal article" date="2000" name="Nature">
        <title>The genome sequence of the thermoacidophilic scavenger Thermoplasma acidophilum.</title>
        <authorList>
            <person name="Ruepp A."/>
            <person name="Graml W."/>
            <person name="Santos-Martinez M.-L."/>
            <person name="Koretke K.K."/>
            <person name="Volker C."/>
            <person name="Mewes H.-W."/>
            <person name="Frishman D."/>
            <person name="Stocker S."/>
            <person name="Lupas A.N."/>
            <person name="Baumeister W."/>
        </authorList>
    </citation>
    <scope>NUCLEOTIDE SEQUENCE [LARGE SCALE GENOMIC DNA]</scope>
    <source>
        <strain>ATCC 25905 / DSM 1728 / JCM 9062 / NBRC 15155 / AMRC-C165</strain>
    </source>
</reference>
<sequence>MVMLISLSFKKVIWMNVDPNLTKYMIKAKIYTDGVVEKPDVVGAIFGQTEGLLGDDLDLRDLQKSGKIGRIEVEIDSKKGRTEGYALIPSGLDQVETAILAAALETIDRIGPCKAKVEIANVEDVRVQKRQKIIERAKKIYQDMNSKGDDLSESLVKSVREEVEKSEIISYGEEKLPAGPAINDSDSIIVVEGRNDVLNLLKYGIKNTIAVQGTNIPETVKKLSKERTVTVFLDGDRGGDLILKEMLQVAEADFVARAPPGTEVEELTYKQIVKALRYKTPIDQYLSMHGMNDELKEYSQRNNLVFGSQPNNNHEAKAEVIEEPPEQPPKNEEIREEQSQQVTVQKEGFLDLLNPHEVSKRIEALAQLKMTEVYDSNGERIFSFPVSEAVERISQDPRGNTIVTGGIISQRLIDVSYNAGIKNIYGLKLGHITKKPVDINVIAWERSL</sequence>
<keyword id="KW-0235">DNA replication</keyword>
<keyword id="KW-0240">DNA-directed RNA polymerase</keyword>
<keyword id="KW-0271">Exosome</keyword>
<keyword id="KW-0460">Magnesium</keyword>
<keyword id="KW-0479">Metal-binding</keyword>
<keyword id="KW-0548">Nucleotidyltransferase</keyword>
<keyword id="KW-0639">Primosome</keyword>
<keyword id="KW-1185">Reference proteome</keyword>
<keyword id="KW-0804">Transcription</keyword>
<keyword id="KW-0808">Transferase</keyword>
<feature type="chain" id="PRO_0000240468" description="DNA primase DnaG">
    <location>
        <begin position="1"/>
        <end position="448"/>
    </location>
</feature>
<feature type="domain" description="Toprim" evidence="1">
    <location>
        <begin position="186"/>
        <end position="260"/>
    </location>
</feature>
<feature type="region of interest" description="Disordered" evidence="2">
    <location>
        <begin position="318"/>
        <end position="340"/>
    </location>
</feature>
<feature type="compositionally biased region" description="Basic and acidic residues" evidence="2">
    <location>
        <begin position="329"/>
        <end position="338"/>
    </location>
</feature>
<feature type="binding site" evidence="1">
    <location>
        <position position="192"/>
    </location>
    <ligand>
        <name>Mg(2+)</name>
        <dbReference type="ChEBI" id="CHEBI:18420"/>
        <label>1</label>
        <note>catalytic</note>
    </ligand>
</feature>
<feature type="binding site" evidence="1">
    <location>
        <position position="234"/>
    </location>
    <ligand>
        <name>Mg(2+)</name>
        <dbReference type="ChEBI" id="CHEBI:18420"/>
        <label>1</label>
        <note>catalytic</note>
    </ligand>
</feature>
<feature type="binding site" evidence="1">
    <location>
        <position position="234"/>
    </location>
    <ligand>
        <name>Mg(2+)</name>
        <dbReference type="ChEBI" id="CHEBI:18420"/>
        <label>2</label>
    </ligand>
</feature>
<feature type="binding site" evidence="1">
    <location>
        <position position="236"/>
    </location>
    <ligand>
        <name>Mg(2+)</name>
        <dbReference type="ChEBI" id="CHEBI:18420"/>
        <label>2</label>
    </ligand>
</feature>
<dbReference type="EC" id="2.7.7.101" evidence="1"/>
<dbReference type="EMBL" id="AL445063">
    <property type="protein sequence ID" value="CAC11245.1"/>
    <property type="molecule type" value="Genomic_DNA"/>
</dbReference>
<dbReference type="SMR" id="Q9HLX7"/>
<dbReference type="FunCoup" id="Q9HLX7">
    <property type="interactions" value="1"/>
</dbReference>
<dbReference type="STRING" id="273075.gene:9571312"/>
<dbReference type="PaxDb" id="273075-Ta0097m"/>
<dbReference type="EnsemblBacteria" id="CAC11245">
    <property type="protein sequence ID" value="CAC11245"/>
    <property type="gene ID" value="CAC11245"/>
</dbReference>
<dbReference type="KEGG" id="tac:Ta0097"/>
<dbReference type="eggNOG" id="arCOG04281">
    <property type="taxonomic scope" value="Archaea"/>
</dbReference>
<dbReference type="HOGENOM" id="CLU_034626_0_0_2"/>
<dbReference type="InParanoid" id="Q9HLX7"/>
<dbReference type="Proteomes" id="UP000001024">
    <property type="component" value="Chromosome"/>
</dbReference>
<dbReference type="GO" id="GO:0005737">
    <property type="term" value="C:cytoplasm"/>
    <property type="evidence" value="ECO:0007669"/>
    <property type="project" value="TreeGrafter"/>
</dbReference>
<dbReference type="GO" id="GO:0000428">
    <property type="term" value="C:DNA-directed RNA polymerase complex"/>
    <property type="evidence" value="ECO:0007669"/>
    <property type="project" value="UniProtKB-KW"/>
</dbReference>
<dbReference type="GO" id="GO:0000178">
    <property type="term" value="C:exosome (RNase complex)"/>
    <property type="evidence" value="ECO:0007669"/>
    <property type="project" value="UniProtKB-KW"/>
</dbReference>
<dbReference type="GO" id="GO:1990077">
    <property type="term" value="C:primosome complex"/>
    <property type="evidence" value="ECO:0007669"/>
    <property type="project" value="UniProtKB-KW"/>
</dbReference>
<dbReference type="GO" id="GO:0003899">
    <property type="term" value="F:DNA-directed RNA polymerase activity"/>
    <property type="evidence" value="ECO:0007669"/>
    <property type="project" value="InterPro"/>
</dbReference>
<dbReference type="GO" id="GO:0046872">
    <property type="term" value="F:metal ion binding"/>
    <property type="evidence" value="ECO:0007669"/>
    <property type="project" value="UniProtKB-KW"/>
</dbReference>
<dbReference type="GO" id="GO:0008143">
    <property type="term" value="F:poly(A) binding"/>
    <property type="evidence" value="ECO:0007669"/>
    <property type="project" value="InterPro"/>
</dbReference>
<dbReference type="GO" id="GO:0006269">
    <property type="term" value="P:DNA replication, synthesis of primer"/>
    <property type="evidence" value="ECO:0007669"/>
    <property type="project" value="UniProtKB-UniRule"/>
</dbReference>
<dbReference type="CDD" id="cd01029">
    <property type="entry name" value="TOPRIM_primases"/>
    <property type="match status" value="1"/>
</dbReference>
<dbReference type="FunFam" id="3.40.1360.10:FF:000010">
    <property type="entry name" value="DNA primase DnaG"/>
    <property type="match status" value="1"/>
</dbReference>
<dbReference type="Gene3D" id="3.40.1360.10">
    <property type="match status" value="1"/>
</dbReference>
<dbReference type="HAMAP" id="MF_00007">
    <property type="entry name" value="DNA_primase_DnaG_arc"/>
    <property type="match status" value="1"/>
</dbReference>
<dbReference type="InterPro" id="IPR050219">
    <property type="entry name" value="DnaG_primase"/>
</dbReference>
<dbReference type="InterPro" id="IPR020607">
    <property type="entry name" value="Primase_DnaG_arc"/>
</dbReference>
<dbReference type="InterPro" id="IPR034154">
    <property type="entry name" value="TOPRIM_DnaG/twinkle"/>
</dbReference>
<dbReference type="InterPro" id="IPR006171">
    <property type="entry name" value="TOPRIM_dom"/>
</dbReference>
<dbReference type="NCBIfam" id="NF003108">
    <property type="entry name" value="PRK04031.1-1"/>
    <property type="match status" value="1"/>
</dbReference>
<dbReference type="PANTHER" id="PTHR30313">
    <property type="entry name" value="DNA PRIMASE"/>
    <property type="match status" value="1"/>
</dbReference>
<dbReference type="PANTHER" id="PTHR30313:SF2">
    <property type="entry name" value="DNA PRIMASE"/>
    <property type="match status" value="1"/>
</dbReference>
<dbReference type="Pfam" id="PF13662">
    <property type="entry name" value="Toprim_4"/>
    <property type="match status" value="1"/>
</dbReference>
<dbReference type="SMART" id="SM00493">
    <property type="entry name" value="TOPRIM"/>
    <property type="match status" value="1"/>
</dbReference>
<dbReference type="SUPFAM" id="SSF56731">
    <property type="entry name" value="DNA primase core"/>
    <property type="match status" value="1"/>
</dbReference>
<dbReference type="PROSITE" id="PS50880">
    <property type="entry name" value="TOPRIM"/>
    <property type="match status" value="1"/>
</dbReference>
<gene>
    <name evidence="1" type="primary">dnaG</name>
    <name type="ordered locus">Ta0097</name>
</gene>
<name>DNAG_THEAC</name>
<protein>
    <recommendedName>
        <fullName evidence="1">DNA primase DnaG</fullName>
        <ecNumber evidence="1">2.7.7.101</ecNumber>
    </recommendedName>
</protein>
<comment type="function">
    <text evidence="1">RNA polymerase that catalyzes the synthesis of short RNA molecules used as primers for DNA polymerase during DNA replication. Also part of the exosome, which is a complex involved in RNA degradation. Acts as a poly(A)-binding protein that enhances the interaction between heteromeric, adenine-rich transcripts and the exosome.</text>
</comment>
<comment type="catalytic activity">
    <reaction evidence="1">
        <text>ssDNA + n NTP = ssDNA/pppN(pN)n-1 hybrid + (n-1) diphosphate.</text>
        <dbReference type="EC" id="2.7.7.101"/>
    </reaction>
</comment>
<comment type="cofactor">
    <cofactor evidence="1">
        <name>Mg(2+)</name>
        <dbReference type="ChEBI" id="CHEBI:18420"/>
    </cofactor>
    <text evidence="1">Binds two Mg(2+) per subunit.</text>
</comment>
<comment type="subunit">
    <text evidence="1">Forms a ternary complex with MCM helicase and DNA. Component of the archaeal exosome complex.</text>
</comment>
<comment type="similarity">
    <text evidence="1">Belongs to the archaeal DnaG primase family.</text>
</comment>
<organism>
    <name type="scientific">Thermoplasma acidophilum (strain ATCC 25905 / DSM 1728 / JCM 9062 / NBRC 15155 / AMRC-C165)</name>
    <dbReference type="NCBI Taxonomy" id="273075"/>
    <lineage>
        <taxon>Archaea</taxon>
        <taxon>Methanobacteriati</taxon>
        <taxon>Thermoplasmatota</taxon>
        <taxon>Thermoplasmata</taxon>
        <taxon>Thermoplasmatales</taxon>
        <taxon>Thermoplasmataceae</taxon>
        <taxon>Thermoplasma</taxon>
    </lineage>
</organism>
<accession>Q9HLX7</accession>